<sequence length="311" mass="35300">MEMENCTRVKEFIFLGLTQNREVSLVLFLFLLLVYVTTLLGNLLIMVTVTCESRLHTPMYFLLHNLSIADICFSSITVPKVLVDLLSERKTISFNHCFTQMFLFHLIGGVDVFSLSVMALDRYVAISKPLHYATIMSRDHCIGLTVAAWLGGFVHSIVQISLLLPLPFCGPNVLDTFYCDVHRVLKLAHTDIFILELLMISNNGLLTTLWFFLLLVSYIVILSLPKSQAGEGRRKAISTCTSHITVVTLHFVPCIYVYARPFTALPMDKAISVTFTVISPLLNPLIYTLRNHEMKSAMRRLKRRLVPSDRK</sequence>
<proteinExistence type="evidence at transcript level"/>
<protein>
    <recommendedName>
        <fullName>Olfactory receptor 4D10</fullName>
    </recommendedName>
    <alternativeName>
        <fullName>Olfactory receptor OR11-251</fullName>
    </alternativeName>
</protein>
<dbReference type="EMBL" id="AB065808">
    <property type="protein sequence ID" value="BAC06027.1"/>
    <property type="molecule type" value="Genomic_DNA"/>
</dbReference>
<dbReference type="EMBL" id="CH471076">
    <property type="protein sequence ID" value="EAW73846.1"/>
    <property type="molecule type" value="Genomic_DNA"/>
</dbReference>
<dbReference type="EMBL" id="BC136893">
    <property type="protein sequence ID" value="AAI36894.1"/>
    <property type="molecule type" value="mRNA"/>
</dbReference>
<dbReference type="EMBL" id="BC136894">
    <property type="protein sequence ID" value="AAI36895.1"/>
    <property type="molecule type" value="mRNA"/>
</dbReference>
<dbReference type="EMBL" id="BK004311">
    <property type="protein sequence ID" value="DAA04709.1"/>
    <property type="molecule type" value="Genomic_DNA"/>
</dbReference>
<dbReference type="CCDS" id="CCDS53636.1"/>
<dbReference type="RefSeq" id="NP_001004705.1">
    <property type="nucleotide sequence ID" value="NM_001004705.2"/>
</dbReference>
<dbReference type="SMR" id="Q8NGI6"/>
<dbReference type="BioGRID" id="133440">
    <property type="interactions" value="3"/>
</dbReference>
<dbReference type="FunCoup" id="Q8NGI6">
    <property type="interactions" value="416"/>
</dbReference>
<dbReference type="STRING" id="9606.ENSP00000436424"/>
<dbReference type="GlyCosmos" id="Q8NGI6">
    <property type="glycosylation" value="1 site, No reported glycans"/>
</dbReference>
<dbReference type="GlyGen" id="Q8NGI6">
    <property type="glycosylation" value="1 site"/>
</dbReference>
<dbReference type="iPTMnet" id="Q8NGI6"/>
<dbReference type="PhosphoSitePlus" id="Q8NGI6"/>
<dbReference type="BioMuta" id="OR4D10"/>
<dbReference type="DMDM" id="71153029"/>
<dbReference type="MassIVE" id="Q8NGI6"/>
<dbReference type="PaxDb" id="9606-ENSP00000436424"/>
<dbReference type="PeptideAtlas" id="Q8NGI6"/>
<dbReference type="Antibodypedia" id="70738">
    <property type="antibodies" value="19 antibodies from 10 providers"/>
</dbReference>
<dbReference type="DNASU" id="390197"/>
<dbReference type="Ensembl" id="ENST00000530162.2">
    <property type="protein sequence ID" value="ENSP00000436424.1"/>
    <property type="gene ID" value="ENSG00000254466.2"/>
</dbReference>
<dbReference type="GeneID" id="390197"/>
<dbReference type="KEGG" id="hsa:390197"/>
<dbReference type="MANE-Select" id="ENST00000530162.2">
    <property type="protein sequence ID" value="ENSP00000436424.1"/>
    <property type="RefSeq nucleotide sequence ID" value="NM_001004705.2"/>
    <property type="RefSeq protein sequence ID" value="NP_001004705.1"/>
</dbReference>
<dbReference type="UCSC" id="uc001nnz.2">
    <property type="organism name" value="human"/>
</dbReference>
<dbReference type="AGR" id="HGNC:15173"/>
<dbReference type="CTD" id="390197"/>
<dbReference type="GeneCards" id="OR4D10"/>
<dbReference type="HGNC" id="HGNC:15173">
    <property type="gene designation" value="OR4D10"/>
</dbReference>
<dbReference type="HPA" id="ENSG00000254466">
    <property type="expression patterns" value="Not detected"/>
</dbReference>
<dbReference type="neXtProt" id="NX_Q8NGI6"/>
<dbReference type="OpenTargets" id="ENSG00000254466"/>
<dbReference type="PharmGKB" id="PA32268"/>
<dbReference type="VEuPathDB" id="HostDB:ENSG00000254466"/>
<dbReference type="eggNOG" id="ENOG502SIBY">
    <property type="taxonomic scope" value="Eukaryota"/>
</dbReference>
<dbReference type="GeneTree" id="ENSGT00940000157204"/>
<dbReference type="HOGENOM" id="CLU_012526_8_1_1"/>
<dbReference type="InParanoid" id="Q8NGI6"/>
<dbReference type="OMA" id="MENCTRV"/>
<dbReference type="OrthoDB" id="6130476at2759"/>
<dbReference type="PAN-GO" id="Q8NGI6">
    <property type="GO annotations" value="2 GO annotations based on evolutionary models"/>
</dbReference>
<dbReference type="PhylomeDB" id="Q8NGI6"/>
<dbReference type="TreeFam" id="TF352732"/>
<dbReference type="PathwayCommons" id="Q8NGI6"/>
<dbReference type="Reactome" id="R-HSA-9752946">
    <property type="pathway name" value="Expression and translocation of olfactory receptors"/>
</dbReference>
<dbReference type="BioGRID-ORCS" id="390197">
    <property type="hits" value="10 hits in 726 CRISPR screens"/>
</dbReference>
<dbReference type="GeneWiki" id="OR4D10"/>
<dbReference type="GenomeRNAi" id="390197"/>
<dbReference type="Pharos" id="Q8NGI6">
    <property type="development level" value="Tdark"/>
</dbReference>
<dbReference type="PRO" id="PR:Q8NGI6"/>
<dbReference type="Proteomes" id="UP000005640">
    <property type="component" value="Chromosome 11"/>
</dbReference>
<dbReference type="RNAct" id="Q8NGI6">
    <property type="molecule type" value="protein"/>
</dbReference>
<dbReference type="Bgee" id="ENSG00000254466">
    <property type="expression patterns" value="Expressed in male germ line stem cell (sensu Vertebrata) in testis and 1 other cell type or tissue"/>
</dbReference>
<dbReference type="ExpressionAtlas" id="Q8NGI6">
    <property type="expression patterns" value="baseline and differential"/>
</dbReference>
<dbReference type="GO" id="GO:0005886">
    <property type="term" value="C:plasma membrane"/>
    <property type="evidence" value="ECO:0000318"/>
    <property type="project" value="GO_Central"/>
</dbReference>
<dbReference type="GO" id="GO:0004930">
    <property type="term" value="F:G protein-coupled receptor activity"/>
    <property type="evidence" value="ECO:0007669"/>
    <property type="project" value="UniProtKB-KW"/>
</dbReference>
<dbReference type="GO" id="GO:0004984">
    <property type="term" value="F:olfactory receptor activity"/>
    <property type="evidence" value="ECO:0000318"/>
    <property type="project" value="GO_Central"/>
</dbReference>
<dbReference type="FunFam" id="1.10.1220.70:FF:000001">
    <property type="entry name" value="Olfactory receptor"/>
    <property type="match status" value="1"/>
</dbReference>
<dbReference type="FunFam" id="1.20.1070.10:FF:000007">
    <property type="entry name" value="Olfactory receptor"/>
    <property type="match status" value="1"/>
</dbReference>
<dbReference type="Gene3D" id="1.20.1070.10">
    <property type="entry name" value="Rhodopsin 7-helix transmembrane proteins"/>
    <property type="match status" value="1"/>
</dbReference>
<dbReference type="InterPro" id="IPR000276">
    <property type="entry name" value="GPCR_Rhodpsn"/>
</dbReference>
<dbReference type="InterPro" id="IPR017452">
    <property type="entry name" value="GPCR_Rhodpsn_7TM"/>
</dbReference>
<dbReference type="InterPro" id="IPR000725">
    <property type="entry name" value="Olfact_rcpt"/>
</dbReference>
<dbReference type="InterPro" id="IPR050427">
    <property type="entry name" value="Olfactory_Receptors"/>
</dbReference>
<dbReference type="PANTHER" id="PTHR48002">
    <property type="entry name" value="OLFACTORY RECEPTOR"/>
    <property type="match status" value="1"/>
</dbReference>
<dbReference type="Pfam" id="PF13853">
    <property type="entry name" value="7tm_4"/>
    <property type="match status" value="1"/>
</dbReference>
<dbReference type="PRINTS" id="PR00237">
    <property type="entry name" value="GPCRRHODOPSN"/>
</dbReference>
<dbReference type="PRINTS" id="PR00245">
    <property type="entry name" value="OLFACTORYR"/>
</dbReference>
<dbReference type="SUPFAM" id="SSF81321">
    <property type="entry name" value="Family A G protein-coupled receptor-like"/>
    <property type="match status" value="1"/>
</dbReference>
<dbReference type="PROSITE" id="PS00237">
    <property type="entry name" value="G_PROTEIN_RECEP_F1_1"/>
    <property type="match status" value="1"/>
</dbReference>
<dbReference type="PROSITE" id="PS50262">
    <property type="entry name" value="G_PROTEIN_RECEP_F1_2"/>
    <property type="match status" value="1"/>
</dbReference>
<keyword id="KW-1003">Cell membrane</keyword>
<keyword id="KW-0297">G-protein coupled receptor</keyword>
<keyword id="KW-0325">Glycoprotein</keyword>
<keyword id="KW-0472">Membrane</keyword>
<keyword id="KW-0552">Olfaction</keyword>
<keyword id="KW-0675">Receptor</keyword>
<keyword id="KW-1185">Reference proteome</keyword>
<keyword id="KW-0716">Sensory transduction</keyword>
<keyword id="KW-0807">Transducer</keyword>
<keyword id="KW-0812">Transmembrane</keyword>
<keyword id="KW-1133">Transmembrane helix</keyword>
<feature type="chain" id="PRO_0000150542" description="Olfactory receptor 4D10">
    <location>
        <begin position="1"/>
        <end position="311"/>
    </location>
</feature>
<feature type="topological domain" description="Extracellular" evidence="1">
    <location>
        <begin position="1"/>
        <end position="25"/>
    </location>
</feature>
<feature type="transmembrane region" description="Helical; Name=1" evidence="1">
    <location>
        <begin position="26"/>
        <end position="49"/>
    </location>
</feature>
<feature type="topological domain" description="Cytoplasmic" evidence="1">
    <location>
        <begin position="50"/>
        <end position="57"/>
    </location>
</feature>
<feature type="transmembrane region" description="Helical; Name=2" evidence="1">
    <location>
        <begin position="58"/>
        <end position="79"/>
    </location>
</feature>
<feature type="topological domain" description="Extracellular" evidence="1">
    <location>
        <begin position="80"/>
        <end position="100"/>
    </location>
</feature>
<feature type="transmembrane region" description="Helical; Name=3" evidence="1">
    <location>
        <begin position="101"/>
        <end position="120"/>
    </location>
</feature>
<feature type="topological domain" description="Cytoplasmic" evidence="1">
    <location>
        <begin position="121"/>
        <end position="139"/>
    </location>
</feature>
<feature type="transmembrane region" description="Helical; Name=4" evidence="1">
    <location>
        <begin position="140"/>
        <end position="158"/>
    </location>
</feature>
<feature type="topological domain" description="Extracellular" evidence="1">
    <location>
        <begin position="159"/>
        <end position="195"/>
    </location>
</feature>
<feature type="transmembrane region" description="Helical; Name=5" evidence="1">
    <location>
        <begin position="196"/>
        <end position="219"/>
    </location>
</feature>
<feature type="topological domain" description="Cytoplasmic" evidence="1">
    <location>
        <begin position="220"/>
        <end position="235"/>
    </location>
</feature>
<feature type="transmembrane region" description="Helical; Name=6" evidence="1">
    <location>
        <begin position="236"/>
        <end position="258"/>
    </location>
</feature>
<feature type="topological domain" description="Extracellular" evidence="1">
    <location>
        <begin position="259"/>
        <end position="269"/>
    </location>
</feature>
<feature type="transmembrane region" description="Helical; Name=7" evidence="1">
    <location>
        <begin position="270"/>
        <end position="289"/>
    </location>
</feature>
<feature type="topological domain" description="Cytoplasmic" evidence="1">
    <location>
        <begin position="290"/>
        <end position="311"/>
    </location>
</feature>
<feature type="glycosylation site" description="N-linked (GlcNAc...) asparagine" evidence="1">
    <location>
        <position position="5"/>
    </location>
</feature>
<name>OR4DA_HUMAN</name>
<evidence type="ECO:0000255" key="1"/>
<evidence type="ECO:0000255" key="2">
    <source>
        <dbReference type="PROSITE-ProRule" id="PRU00521"/>
    </source>
</evidence>
<evidence type="ECO:0000305" key="3"/>
<organism>
    <name type="scientific">Homo sapiens</name>
    <name type="common">Human</name>
    <dbReference type="NCBI Taxonomy" id="9606"/>
    <lineage>
        <taxon>Eukaryota</taxon>
        <taxon>Metazoa</taxon>
        <taxon>Chordata</taxon>
        <taxon>Craniata</taxon>
        <taxon>Vertebrata</taxon>
        <taxon>Euteleostomi</taxon>
        <taxon>Mammalia</taxon>
        <taxon>Eutheria</taxon>
        <taxon>Euarchontoglires</taxon>
        <taxon>Primates</taxon>
        <taxon>Haplorrhini</taxon>
        <taxon>Catarrhini</taxon>
        <taxon>Hominidae</taxon>
        <taxon>Homo</taxon>
    </lineage>
</organism>
<reference key="1">
    <citation type="submission" date="2001-07" db="EMBL/GenBank/DDBJ databases">
        <title>Genome-wide discovery and analysis of human seven transmembrane helix receptor genes.</title>
        <authorList>
            <person name="Suwa M."/>
            <person name="Sato T."/>
            <person name="Okouchi I."/>
            <person name="Arita M."/>
            <person name="Futami K."/>
            <person name="Matsumoto S."/>
            <person name="Tsutsumi S."/>
            <person name="Aburatani H."/>
            <person name="Asai K."/>
            <person name="Akiyama Y."/>
        </authorList>
    </citation>
    <scope>NUCLEOTIDE SEQUENCE [GENOMIC DNA]</scope>
</reference>
<reference key="2">
    <citation type="submission" date="2005-07" db="EMBL/GenBank/DDBJ databases">
        <authorList>
            <person name="Mural R.J."/>
            <person name="Istrail S."/>
            <person name="Sutton G.G."/>
            <person name="Florea L."/>
            <person name="Halpern A.L."/>
            <person name="Mobarry C.M."/>
            <person name="Lippert R."/>
            <person name="Walenz B."/>
            <person name="Shatkay H."/>
            <person name="Dew I."/>
            <person name="Miller J.R."/>
            <person name="Flanigan M.J."/>
            <person name="Edwards N.J."/>
            <person name="Bolanos R."/>
            <person name="Fasulo D."/>
            <person name="Halldorsson B.V."/>
            <person name="Hannenhalli S."/>
            <person name="Turner R."/>
            <person name="Yooseph S."/>
            <person name="Lu F."/>
            <person name="Nusskern D.R."/>
            <person name="Shue B.C."/>
            <person name="Zheng X.H."/>
            <person name="Zhong F."/>
            <person name="Delcher A.L."/>
            <person name="Huson D.H."/>
            <person name="Kravitz S.A."/>
            <person name="Mouchard L."/>
            <person name="Reinert K."/>
            <person name="Remington K.A."/>
            <person name="Clark A.G."/>
            <person name="Waterman M.S."/>
            <person name="Eichler E.E."/>
            <person name="Adams M.D."/>
            <person name="Hunkapiller M.W."/>
            <person name="Myers E.W."/>
            <person name="Venter J.C."/>
        </authorList>
    </citation>
    <scope>NUCLEOTIDE SEQUENCE [LARGE SCALE GENOMIC DNA]</scope>
</reference>
<reference key="3">
    <citation type="journal article" date="2004" name="Genome Res.">
        <title>The status, quality, and expansion of the NIH full-length cDNA project: the Mammalian Gene Collection (MGC).</title>
        <authorList>
            <consortium name="The MGC Project Team"/>
        </authorList>
    </citation>
    <scope>NUCLEOTIDE SEQUENCE [LARGE SCALE MRNA]</scope>
</reference>
<reference key="4">
    <citation type="journal article" date="2004" name="Proc. Natl. Acad. Sci. U.S.A.">
        <title>The human olfactory receptor gene family.</title>
        <authorList>
            <person name="Malnic B."/>
            <person name="Godfrey P.A."/>
            <person name="Buck L.B."/>
        </authorList>
    </citation>
    <scope>IDENTIFICATION</scope>
</reference>
<reference key="5">
    <citation type="journal article" date="2004" name="Proc. Natl. Acad. Sci. U.S.A.">
        <authorList>
            <person name="Malnic B."/>
            <person name="Godfrey P.A."/>
            <person name="Buck L.B."/>
        </authorList>
    </citation>
    <scope>ERRATUM OF PUBMED:14983052</scope>
</reference>
<accession>Q8NGI6</accession>
<accession>B2RNH6</accession>
<comment type="function">
    <text evidence="3">Odorant receptor.</text>
</comment>
<comment type="subcellular location">
    <subcellularLocation>
        <location>Cell membrane</location>
        <topology>Multi-pass membrane protein</topology>
    </subcellularLocation>
</comment>
<comment type="similarity">
    <text evidence="2">Belongs to the G-protein coupled receptor 1 family.</text>
</comment>
<comment type="online information" name="Human Olfactory Receptor Data Exploratorium (HORDE)">
    <link uri="http://genome.weizmann.ac.il/horde/card/index/symbol:OR4D10"/>
</comment>
<gene>
    <name type="primary">OR4D10</name>
    <name type="synonym">OR4D10P</name>
</gene>